<reference key="1">
    <citation type="submission" date="2006-12" db="EMBL/GenBank/DDBJ databases">
        <title>Complete sequence of chromosome of Mycobacterium sp. KMS.</title>
        <authorList>
            <consortium name="US DOE Joint Genome Institute"/>
            <person name="Copeland A."/>
            <person name="Lucas S."/>
            <person name="Lapidus A."/>
            <person name="Barry K."/>
            <person name="Detter J.C."/>
            <person name="Glavina del Rio T."/>
            <person name="Hammon N."/>
            <person name="Israni S."/>
            <person name="Dalin E."/>
            <person name="Tice H."/>
            <person name="Pitluck S."/>
            <person name="Kiss H."/>
            <person name="Brettin T."/>
            <person name="Bruce D."/>
            <person name="Han C."/>
            <person name="Tapia R."/>
            <person name="Gilna P."/>
            <person name="Schmutz J."/>
            <person name="Larimer F."/>
            <person name="Land M."/>
            <person name="Hauser L."/>
            <person name="Kyrpides N."/>
            <person name="Mikhailova N."/>
            <person name="Miller C.D."/>
            <person name="Richardson P."/>
        </authorList>
    </citation>
    <scope>NUCLEOTIDE SEQUENCE [LARGE SCALE GENOMIC DNA]</scope>
    <source>
        <strain>KMS</strain>
    </source>
</reference>
<comment type="function">
    <text evidence="2">Catalyzes the formation of N(7)-methylguanine at position 46 (m7G46) in tRNA.</text>
</comment>
<comment type="catalytic activity">
    <reaction evidence="2">
        <text>guanosine(46) in tRNA + S-adenosyl-L-methionine = N(7)-methylguanosine(46) in tRNA + S-adenosyl-L-homocysteine</text>
        <dbReference type="Rhea" id="RHEA:42708"/>
        <dbReference type="Rhea" id="RHEA-COMP:10188"/>
        <dbReference type="Rhea" id="RHEA-COMP:10189"/>
        <dbReference type="ChEBI" id="CHEBI:57856"/>
        <dbReference type="ChEBI" id="CHEBI:59789"/>
        <dbReference type="ChEBI" id="CHEBI:74269"/>
        <dbReference type="ChEBI" id="CHEBI:74480"/>
        <dbReference type="EC" id="2.1.1.33"/>
    </reaction>
</comment>
<comment type="pathway">
    <text evidence="2">tRNA modification; N(7)-methylguanine-tRNA biosynthesis.</text>
</comment>
<comment type="similarity">
    <text evidence="2">Belongs to the class I-like SAM-binding methyltransferase superfamily. TrmB family.</text>
</comment>
<keyword id="KW-0489">Methyltransferase</keyword>
<keyword id="KW-0949">S-adenosyl-L-methionine</keyword>
<keyword id="KW-0808">Transferase</keyword>
<keyword id="KW-0819">tRNA processing</keyword>
<name>TRMB_MYCSK</name>
<organism>
    <name type="scientific">Mycobacterium sp. (strain KMS)</name>
    <dbReference type="NCBI Taxonomy" id="189918"/>
    <lineage>
        <taxon>Bacteria</taxon>
        <taxon>Bacillati</taxon>
        <taxon>Actinomycetota</taxon>
        <taxon>Actinomycetes</taxon>
        <taxon>Mycobacteriales</taxon>
        <taxon>Mycobacteriaceae</taxon>
        <taxon>Mycobacterium</taxon>
    </lineage>
</organism>
<accession>A1U992</accession>
<protein>
    <recommendedName>
        <fullName evidence="2">tRNA (guanine-N(7)-)-methyltransferase</fullName>
        <ecNumber evidence="2">2.1.1.33</ecNumber>
    </recommendedName>
    <alternativeName>
        <fullName evidence="2">tRNA (guanine(46)-N(7))-methyltransferase</fullName>
    </alternativeName>
    <alternativeName>
        <fullName evidence="2">tRNA(m7G46)-methyltransferase</fullName>
    </alternativeName>
</protein>
<proteinExistence type="inferred from homology"/>
<evidence type="ECO:0000250" key="1"/>
<evidence type="ECO:0000255" key="2">
    <source>
        <dbReference type="HAMAP-Rule" id="MF_01057"/>
    </source>
</evidence>
<evidence type="ECO:0000256" key="3">
    <source>
        <dbReference type="SAM" id="MobiDB-lite"/>
    </source>
</evidence>
<dbReference type="EC" id="2.1.1.33" evidence="2"/>
<dbReference type="EMBL" id="CP000518">
    <property type="protein sequence ID" value="ABL89400.1"/>
    <property type="molecule type" value="Genomic_DNA"/>
</dbReference>
<dbReference type="SMR" id="A1U992"/>
<dbReference type="STRING" id="189918.Mkms_0182"/>
<dbReference type="KEGG" id="mkm:Mkms_0182"/>
<dbReference type="HOGENOM" id="CLU_050910_0_2_11"/>
<dbReference type="OrthoDB" id="9802090at2"/>
<dbReference type="UniPathway" id="UPA00989"/>
<dbReference type="GO" id="GO:0043527">
    <property type="term" value="C:tRNA methyltransferase complex"/>
    <property type="evidence" value="ECO:0007669"/>
    <property type="project" value="TreeGrafter"/>
</dbReference>
<dbReference type="GO" id="GO:0008176">
    <property type="term" value="F:tRNA (guanine(46)-N7)-methyltransferase activity"/>
    <property type="evidence" value="ECO:0007669"/>
    <property type="project" value="UniProtKB-UniRule"/>
</dbReference>
<dbReference type="CDD" id="cd02440">
    <property type="entry name" value="AdoMet_MTases"/>
    <property type="match status" value="1"/>
</dbReference>
<dbReference type="Gene3D" id="3.40.50.150">
    <property type="entry name" value="Vaccinia Virus protein VP39"/>
    <property type="match status" value="1"/>
</dbReference>
<dbReference type="HAMAP" id="MF_01057">
    <property type="entry name" value="tRNA_methyltr_TrmB"/>
    <property type="match status" value="1"/>
</dbReference>
<dbReference type="InterPro" id="IPR029063">
    <property type="entry name" value="SAM-dependent_MTases_sf"/>
</dbReference>
<dbReference type="InterPro" id="IPR003358">
    <property type="entry name" value="tRNA_(Gua-N-7)_MeTrfase_Trmb"/>
</dbReference>
<dbReference type="InterPro" id="IPR055361">
    <property type="entry name" value="tRNA_methyltr_TrmB_bact"/>
</dbReference>
<dbReference type="NCBIfam" id="TIGR00091">
    <property type="entry name" value="tRNA (guanosine(46)-N7)-methyltransferase TrmB"/>
    <property type="match status" value="1"/>
</dbReference>
<dbReference type="PANTHER" id="PTHR23417">
    <property type="entry name" value="3-DEOXY-D-MANNO-OCTULOSONIC-ACID TRANSFERASE/TRNA GUANINE-N 7 - -METHYLTRANSFERASE"/>
    <property type="match status" value="1"/>
</dbReference>
<dbReference type="PANTHER" id="PTHR23417:SF14">
    <property type="entry name" value="PENTACOTRIPEPTIDE-REPEAT REGION OF PRORP DOMAIN-CONTAINING PROTEIN"/>
    <property type="match status" value="1"/>
</dbReference>
<dbReference type="Pfam" id="PF02390">
    <property type="entry name" value="Methyltransf_4"/>
    <property type="match status" value="1"/>
</dbReference>
<dbReference type="SUPFAM" id="SSF53335">
    <property type="entry name" value="S-adenosyl-L-methionine-dependent methyltransferases"/>
    <property type="match status" value="1"/>
</dbReference>
<dbReference type="PROSITE" id="PS51625">
    <property type="entry name" value="SAM_MT_TRMB"/>
    <property type="match status" value="1"/>
</dbReference>
<feature type="chain" id="PRO_0000288182" description="tRNA (guanine-N(7)-)-methyltransferase">
    <location>
        <begin position="1"/>
        <end position="275"/>
    </location>
</feature>
<feature type="region of interest" description="Disordered" evidence="3">
    <location>
        <begin position="1"/>
        <end position="73"/>
    </location>
</feature>
<feature type="compositionally biased region" description="Basic residues" evidence="3">
    <location>
        <begin position="46"/>
        <end position="59"/>
    </location>
</feature>
<feature type="active site" evidence="1">
    <location>
        <position position="182"/>
    </location>
</feature>
<feature type="binding site" evidence="2">
    <location>
        <position position="107"/>
    </location>
    <ligand>
        <name>S-adenosyl-L-methionine</name>
        <dbReference type="ChEBI" id="CHEBI:59789"/>
    </ligand>
</feature>
<feature type="binding site" evidence="2">
    <location>
        <position position="132"/>
    </location>
    <ligand>
        <name>S-adenosyl-L-methionine</name>
        <dbReference type="ChEBI" id="CHEBI:59789"/>
    </ligand>
</feature>
<feature type="binding site" evidence="2">
    <location>
        <position position="159"/>
    </location>
    <ligand>
        <name>S-adenosyl-L-methionine</name>
        <dbReference type="ChEBI" id="CHEBI:59789"/>
    </ligand>
</feature>
<feature type="binding site" evidence="2">
    <location>
        <position position="182"/>
    </location>
    <ligand>
        <name>S-adenosyl-L-methionine</name>
        <dbReference type="ChEBI" id="CHEBI:59789"/>
    </ligand>
</feature>
<feature type="binding site" evidence="2">
    <location>
        <position position="186"/>
    </location>
    <ligand>
        <name>substrate</name>
    </ligand>
</feature>
<feature type="binding site" evidence="2">
    <location>
        <position position="218"/>
    </location>
    <ligand>
        <name>substrate</name>
    </ligand>
</feature>
<feature type="binding site" evidence="2">
    <location>
        <begin position="254"/>
        <end position="257"/>
    </location>
    <ligand>
        <name>substrate</name>
    </ligand>
</feature>
<sequence>MRHHGRMHARESDVAGGPARDSAGGPARDSAGGPARDSAGDDSPSAHRHRRVTSFRSRRSALSGGQQDTWERLWPELGTEARDDDGRPAALIDTAAWFGRTAPLVLEIGSGTGTSTLAMAQDEPDIDVIAVEVYRRGLAQLLTGIDRAGVRNIRMIRGDGVDVLEYMVASGSLTGVRVFFPDPWPKARHHKRRLLQPSTVALIADRLRPGGILHAATDHAGYAEQIAAVGDAEPLLRRVDLTDDLPISVRRPVTKYERKALAGPDVAELLWEKVP</sequence>
<gene>
    <name evidence="2" type="primary">trmB</name>
    <name type="ordered locus">Mkms_0182</name>
</gene>